<sequence length="410" mass="44999">MGSSVYITVELAIAVLAILGNVLVCWAVWINSNLQNVTNFFVVSLAAADIAVGVLAIPFAITISTGFCAACHGCLFFACFVLVLTQSSIFSLLAIAIDRYIAIRIPLRYNGLVTGVRAKGIIAICWVLSFAIGLTPMLGWNNCSQKDGNSTKTCGEGRVTCLFEDVVPMNYMVYYNFFAFVLLPLLLMLAIYLRIFLAARRQLKQMESQPLPGERTRSTLQKEVHAAKSLAIIVGLFALCWLPLHIINCFTFFCSTCRHAPPWLMYLAIILSHSNSVVNPFIYAYRIREFRQTFRKIIRTHVLRRQEPFQAGGSSAWALAAHSTEGEQVSLRLNGHPLGVWANGSATHSGRRPNGYTLGLGGGGSAQGSPRDVELPTQERQEGQEHPGLRGHLVQARVGASSWSSEFAPS</sequence>
<reference key="1">
    <citation type="journal article" date="1992" name="Biochem. Biophys. Res. Commun.">
        <title>Molecular cloning of a novel adenosine receptor gene from rat brain.</title>
        <authorList>
            <person name="Chern Y."/>
            <person name="King K."/>
            <person name="Lai H.-L."/>
            <person name="Lai H.-T."/>
        </authorList>
    </citation>
    <scope>NUCLEOTIDE SEQUENCE [MRNA]</scope>
    <source>
        <tissue>Brain</tissue>
    </source>
</reference>
<reference key="2">
    <citation type="submission" date="2008-06" db="EMBL/GenBank/DDBJ databases">
        <authorList>
            <person name="Chern Y."/>
        </authorList>
    </citation>
    <scope>SEQUENCE REVISION TO 183</scope>
    <source>
        <tissue>Brain</tissue>
    </source>
</reference>
<reference key="3">
    <citation type="journal article" date="1992" name="Brain Res. Mol. Brain Res.">
        <title>Molecular cloning of the rat A2 adenosine receptor: selective co-expression with D2 dopamine receptors in rat striatum.</title>
        <authorList>
            <person name="Fink J.S."/>
            <person name="Weaver D.R."/>
            <person name="Rivkees S.A."/>
            <person name="Peterfreund R.A."/>
            <person name="Pollack A.E."/>
            <person name="Adler E.M."/>
            <person name="Reppert S.M."/>
        </authorList>
    </citation>
    <scope>NUCLEOTIDE SEQUENCE [MRNA]</scope>
    <source>
        <tissue>Corpus striatum</tissue>
    </source>
</reference>
<reference key="4">
    <citation type="submission" date="2000-01" db="EMBL/GenBank/DDBJ databases">
        <title>Rattus norvegicus mucosa A2A adenosine receptor mRNA.</title>
        <authorList>
            <person name="Yip L."/>
            <person name="Hewitt J."/>
            <person name="Kwok Y."/>
        </authorList>
    </citation>
    <scope>NUCLEOTIDE SEQUENCE [MRNA]</scope>
</reference>
<reference key="5">
    <citation type="journal article" date="2004" name="Genome Res.">
        <title>The status, quality, and expansion of the NIH full-length cDNA project: the Mammalian Gene Collection (MGC).</title>
        <authorList>
            <consortium name="The MGC Project Team"/>
        </authorList>
    </citation>
    <scope>NUCLEOTIDE SEQUENCE [LARGE SCALE MRNA]</scope>
    <source>
        <tissue>Lung</tissue>
    </source>
</reference>
<reference key="6">
    <citation type="journal article" date="2006" name="Mol. Pharmacol.">
        <title>The ubiquitin-specific protease Usp4 regulates the cell surface level of the A2A receptor.</title>
        <authorList>
            <person name="Milojevic T."/>
            <person name="Reiterer V."/>
            <person name="Stefan E."/>
            <person name="Korkhov V.M."/>
            <person name="Dorostkar M.M."/>
            <person name="Ducza E."/>
            <person name="Ogris E."/>
            <person name="Boehm S."/>
            <person name="Freissmuth M."/>
            <person name="Nanoff C."/>
        </authorList>
    </citation>
    <scope>SUBCELLULAR LOCATION</scope>
</reference>
<reference key="7">
    <citation type="journal article" date="2013" name="Biochim. Biophys. Acta">
        <title>A novel Galphas-binding protein, Gas-2 like 2, facilitates the signaling of the A2A adenosine receptor.</title>
        <authorList>
            <person name="Wu Y.C."/>
            <person name="Lai H.L."/>
            <person name="Chang W.C."/>
            <person name="Lin J.T."/>
            <person name="Liu Y.J."/>
            <person name="Chern Y."/>
        </authorList>
    </citation>
    <scope>FUNCTION</scope>
    <scope>INTERACTION WITH GAS2L2</scope>
    <scope>SUBCELLULAR LOCATION</scope>
    <scope>TISSUE SPECIFICITY</scope>
</reference>
<keyword id="KW-1003">Cell membrane</keyword>
<keyword id="KW-1015">Disulfide bond</keyword>
<keyword id="KW-0297">G-protein coupled receptor</keyword>
<keyword id="KW-0325">Glycoprotein</keyword>
<keyword id="KW-0472">Membrane</keyword>
<keyword id="KW-0675">Receptor</keyword>
<keyword id="KW-1185">Reference proteome</keyword>
<keyword id="KW-0807">Transducer</keyword>
<keyword id="KW-0812">Transmembrane</keyword>
<keyword id="KW-1133">Transmembrane helix</keyword>
<keyword id="KW-0832">Ubl conjugation</keyword>
<feature type="chain" id="PRO_0000069001" description="Adenosine receptor A2a">
    <location>
        <begin position="1"/>
        <end position="410"/>
    </location>
</feature>
<feature type="topological domain" description="Extracellular" evidence="1">
    <location>
        <begin position="1"/>
        <end position="4"/>
    </location>
</feature>
<feature type="transmembrane region" description="Helical; Name=1" evidence="1">
    <location>
        <begin position="5"/>
        <end position="29"/>
    </location>
</feature>
<feature type="topological domain" description="Cytoplasmic" evidence="1">
    <location>
        <begin position="30"/>
        <end position="39"/>
    </location>
</feature>
<feature type="transmembrane region" description="Helical; Name=2" evidence="1">
    <location>
        <begin position="40"/>
        <end position="63"/>
    </location>
</feature>
<feature type="topological domain" description="Extracellular" evidence="1">
    <location>
        <begin position="64"/>
        <end position="74"/>
    </location>
</feature>
<feature type="transmembrane region" description="Helical; Name=3" evidence="1">
    <location>
        <begin position="75"/>
        <end position="97"/>
    </location>
</feature>
<feature type="topological domain" description="Cytoplasmic" evidence="1">
    <location>
        <begin position="98"/>
        <end position="117"/>
    </location>
</feature>
<feature type="transmembrane region" description="Helical; Name=4" evidence="1">
    <location>
        <begin position="118"/>
        <end position="140"/>
    </location>
</feature>
<feature type="topological domain" description="Extracellular" evidence="1">
    <location>
        <begin position="141"/>
        <end position="168"/>
    </location>
</feature>
<feature type="transmembrane region" description="Helical; Name=5" evidence="1">
    <location>
        <begin position="169"/>
        <end position="193"/>
    </location>
</feature>
<feature type="topological domain" description="Cytoplasmic" evidence="1">
    <location>
        <begin position="194"/>
        <end position="229"/>
    </location>
</feature>
<feature type="transmembrane region" description="Helical; Name=6" evidence="1">
    <location>
        <begin position="230"/>
        <end position="253"/>
    </location>
</feature>
<feature type="topological domain" description="Extracellular" evidence="1">
    <location>
        <begin position="254"/>
        <end position="261"/>
    </location>
</feature>
<feature type="transmembrane region" description="Helical; Name=7" evidence="1">
    <location>
        <begin position="262"/>
        <end position="285"/>
    </location>
</feature>
<feature type="topological domain" description="Cytoplasmic" evidence="1">
    <location>
        <begin position="286"/>
        <end position="410"/>
    </location>
</feature>
<feature type="region of interest" description="Interaction with GAS2L2" evidence="8">
    <location>
        <begin position="322"/>
        <end position="410"/>
    </location>
</feature>
<feature type="region of interest" description="Disordered" evidence="6">
    <location>
        <begin position="344"/>
        <end position="410"/>
    </location>
</feature>
<feature type="compositionally biased region" description="Basic and acidic residues" evidence="6">
    <location>
        <begin position="371"/>
        <end position="388"/>
    </location>
</feature>
<feature type="compositionally biased region" description="Polar residues" evidence="6">
    <location>
        <begin position="401"/>
        <end position="410"/>
    </location>
</feature>
<feature type="binding site" evidence="3">
    <location>
        <position position="164"/>
    </location>
    <ligand>
        <name>adenosine</name>
        <dbReference type="ChEBI" id="CHEBI:16335"/>
        <note>agonist</note>
    </ligand>
</feature>
<feature type="binding site" evidence="3">
    <location>
        <position position="248"/>
    </location>
    <ligand>
        <name>adenosine</name>
        <dbReference type="ChEBI" id="CHEBI:16335"/>
        <note>agonist</note>
    </ligand>
</feature>
<feature type="binding site" evidence="3">
    <location>
        <position position="272"/>
    </location>
    <ligand>
        <name>adenosine</name>
        <dbReference type="ChEBI" id="CHEBI:16335"/>
        <note>agonist</note>
    </ligand>
</feature>
<feature type="binding site" evidence="3">
    <location>
        <position position="273"/>
    </location>
    <ligand>
        <name>adenosine</name>
        <dbReference type="ChEBI" id="CHEBI:16335"/>
        <note>agonist</note>
    </ligand>
</feature>
<feature type="glycosylation site" description="N-linked (GlcNAc...) asparagine" evidence="4">
    <location>
        <position position="142"/>
    </location>
</feature>
<feature type="glycosylation site" description="N-linked (GlcNAc...) asparagine" evidence="4">
    <location>
        <position position="149"/>
    </location>
</feature>
<feature type="disulfide bond" evidence="5">
    <location>
        <begin position="68"/>
        <end position="154"/>
    </location>
</feature>
<feature type="disulfide bond" evidence="5">
    <location>
        <begin position="71"/>
        <end position="143"/>
    </location>
</feature>
<feature type="disulfide bond" evidence="5">
    <location>
        <begin position="74"/>
        <end position="161"/>
    </location>
</feature>
<feature type="disulfide bond" evidence="5">
    <location>
        <begin position="254"/>
        <end position="257"/>
    </location>
</feature>
<feature type="sequence conflict" description="In Ref. 1; AAA70305." evidence="9" ref="1">
    <original>A</original>
    <variation>T</variation>
    <location>
        <position position="268"/>
    </location>
</feature>
<comment type="function">
    <text evidence="2 8">Receptor for adenosine (By similarity). The activity of this receptor is mediated by G proteins which activate adenylyl cyclase (PubMed:23994616).</text>
</comment>
<comment type="subunit">
    <text evidence="3 8">Interacts (via cytoplasmic C-terminal domain) with USP4; the interaction is direct (By similarity). May interact with DRD4 (By similarity). Interacts with NECAB2 (By similarity). Interacts (via cytoplasmic C-terminal domain) with GAS2L2; interaction enhances receptor-mediated adenylyl cyclase activity (PubMed:23994616).</text>
</comment>
<comment type="interaction">
    <interactant intactId="EBI-2902822">
        <id>P30543</id>
    </interactant>
    <interactant intactId="EBI-2909800">
        <id>P20272</id>
        <label>Cnr1</label>
    </interactant>
    <organismsDiffer>false</organismsDiffer>
    <experiments>3</experiments>
</comment>
<comment type="interaction">
    <interactant intactId="EBI-2902822">
        <id>P30543</id>
    </interactant>
    <interactant intactId="EBI-2910751">
        <id>Q9QZE7</id>
        <label>Tsnax</label>
    </interactant>
    <organismsDiffer>true</organismsDiffer>
    <experiments>6</experiments>
</comment>
<comment type="subcellular location">
    <subcellularLocation>
        <location evidence="7 8">Cell membrane</location>
        <topology evidence="7">Multi-pass membrane protein</topology>
    </subcellularLocation>
    <text evidence="8">Colocalizes with GAS2L2 at neuronal processes.</text>
</comment>
<comment type="tissue specificity">
    <text evidence="8">Expressed in striatal neurons (at protein level).</text>
</comment>
<comment type="domain">
    <text evidence="1">The cytoplasmic C-terminal domain is necessary for targeting the non-ubiquitinated form of this protein to the cell surface.</text>
</comment>
<comment type="PTM">
    <text evidence="1">Ubiquitinated. Deubiquitinated by USP4; leading to stabilization and expression at the cell surface (By similarity).</text>
</comment>
<comment type="similarity">
    <text evidence="5">Belongs to the G-protein coupled receptor 1 family.</text>
</comment>
<proteinExistence type="evidence at protein level"/>
<gene>
    <name type="primary">Adora2a</name>
</gene>
<evidence type="ECO:0000250" key="1"/>
<evidence type="ECO:0000250" key="2">
    <source>
        <dbReference type="UniProtKB" id="P11617"/>
    </source>
</evidence>
<evidence type="ECO:0000250" key="3">
    <source>
        <dbReference type="UniProtKB" id="P29274"/>
    </source>
</evidence>
<evidence type="ECO:0000255" key="4"/>
<evidence type="ECO:0000255" key="5">
    <source>
        <dbReference type="PROSITE-ProRule" id="PRU00521"/>
    </source>
</evidence>
<evidence type="ECO:0000256" key="6">
    <source>
        <dbReference type="SAM" id="MobiDB-lite"/>
    </source>
</evidence>
<evidence type="ECO:0000269" key="7">
    <source>
    </source>
</evidence>
<evidence type="ECO:0000269" key="8">
    <source>
    </source>
</evidence>
<evidence type="ECO:0000305" key="9"/>
<protein>
    <recommendedName>
        <fullName>Adenosine receptor A2a</fullName>
    </recommendedName>
</protein>
<dbReference type="EMBL" id="M91214">
    <property type="protein sequence ID" value="AAA70305.2"/>
    <property type="molecule type" value="mRNA"/>
</dbReference>
<dbReference type="EMBL" id="L08102">
    <property type="status" value="NOT_ANNOTATED_CDS"/>
    <property type="molecule type" value="mRNA"/>
</dbReference>
<dbReference type="EMBL" id="S47609">
    <property type="protein sequence ID" value="AAA11888.1"/>
    <property type="molecule type" value="mRNA"/>
</dbReference>
<dbReference type="EMBL" id="AF228684">
    <property type="protein sequence ID" value="AAF61924.1"/>
    <property type="molecule type" value="mRNA"/>
</dbReference>
<dbReference type="EMBL" id="BC081727">
    <property type="protein sequence ID" value="AAH81727.1"/>
    <property type="molecule type" value="mRNA"/>
</dbReference>
<dbReference type="PIR" id="A48974">
    <property type="entry name" value="A48974"/>
</dbReference>
<dbReference type="RefSeq" id="NP_445746.3">
    <property type="nucleotide sequence ID" value="NM_053294.4"/>
</dbReference>
<dbReference type="RefSeq" id="XP_017457041.1">
    <property type="nucleotide sequence ID" value="XM_017601552.3"/>
</dbReference>
<dbReference type="RefSeq" id="XP_017457042.1">
    <property type="nucleotide sequence ID" value="XM_017601553.1"/>
</dbReference>
<dbReference type="RefSeq" id="XP_017457043.1">
    <property type="nucleotide sequence ID" value="XM_017601554.1"/>
</dbReference>
<dbReference type="RefSeq" id="XP_017457044.1">
    <property type="nucleotide sequence ID" value="XM_017601555.1"/>
</dbReference>
<dbReference type="SMR" id="P30543"/>
<dbReference type="BioGRID" id="247408">
    <property type="interactions" value="6"/>
</dbReference>
<dbReference type="CORUM" id="P30543"/>
<dbReference type="FunCoup" id="P30543">
    <property type="interactions" value="314"/>
</dbReference>
<dbReference type="IntAct" id="P30543">
    <property type="interactions" value="7"/>
</dbReference>
<dbReference type="STRING" id="10116.ENSRNOP00000001759"/>
<dbReference type="BindingDB" id="P30543"/>
<dbReference type="ChEMBL" id="CHEMBL302"/>
<dbReference type="DrugCentral" id="P30543"/>
<dbReference type="GuidetoPHARMACOLOGY" id="19"/>
<dbReference type="GlyCosmos" id="P30543">
    <property type="glycosylation" value="2 sites, No reported glycans"/>
</dbReference>
<dbReference type="GlyGen" id="P30543">
    <property type="glycosylation" value="4 sites"/>
</dbReference>
<dbReference type="PhosphoSitePlus" id="P30543"/>
<dbReference type="PaxDb" id="10116-ENSRNOP00000001759"/>
<dbReference type="Ensembl" id="ENSRNOT00000001759.4">
    <property type="protein sequence ID" value="ENSRNOP00000001759.2"/>
    <property type="gene ID" value="ENSRNOG00000001302.4"/>
</dbReference>
<dbReference type="GeneID" id="25369"/>
<dbReference type="KEGG" id="rno:25369"/>
<dbReference type="UCSC" id="RGD:2049">
    <property type="organism name" value="rat"/>
</dbReference>
<dbReference type="AGR" id="RGD:2049"/>
<dbReference type="CTD" id="135"/>
<dbReference type="RGD" id="2049">
    <property type="gene designation" value="Adora2a"/>
</dbReference>
<dbReference type="eggNOG" id="KOG3656">
    <property type="taxonomic scope" value="Eukaryota"/>
</dbReference>
<dbReference type="GeneTree" id="ENSGT01030000234555"/>
<dbReference type="HOGENOM" id="CLU_009579_11_5_1"/>
<dbReference type="InParanoid" id="P30543"/>
<dbReference type="OMA" id="PPLWLMY"/>
<dbReference type="OrthoDB" id="9445642at2759"/>
<dbReference type="PhylomeDB" id="P30543"/>
<dbReference type="TreeFam" id="TF325296"/>
<dbReference type="Reactome" id="R-RNO-417973">
    <property type="pathway name" value="Adenosine P1 receptors"/>
</dbReference>
<dbReference type="Reactome" id="R-RNO-5683826">
    <property type="pathway name" value="Surfactant metabolism"/>
</dbReference>
<dbReference type="PRO" id="PR:P30543"/>
<dbReference type="Proteomes" id="UP000002494">
    <property type="component" value="Chromosome 20"/>
</dbReference>
<dbReference type="Bgee" id="ENSRNOG00000001302">
    <property type="expression patterns" value="Expressed in heart and 18 other cell types or tissues"/>
</dbReference>
<dbReference type="GO" id="GO:0032279">
    <property type="term" value="C:asymmetric synapse"/>
    <property type="evidence" value="ECO:0000314"/>
    <property type="project" value="RGD"/>
</dbReference>
<dbReference type="GO" id="GO:0030673">
    <property type="term" value="C:axolemma"/>
    <property type="evidence" value="ECO:0000314"/>
    <property type="project" value="RGD"/>
</dbReference>
<dbReference type="GO" id="GO:0030424">
    <property type="term" value="C:axon"/>
    <property type="evidence" value="ECO:0000314"/>
    <property type="project" value="RGD"/>
</dbReference>
<dbReference type="GO" id="GO:0030425">
    <property type="term" value="C:dendrite"/>
    <property type="evidence" value="ECO:0000314"/>
    <property type="project" value="RGD"/>
</dbReference>
<dbReference type="GO" id="GO:0098978">
    <property type="term" value="C:glutamatergic synapse"/>
    <property type="evidence" value="ECO:0000314"/>
    <property type="project" value="SynGO"/>
</dbReference>
<dbReference type="GO" id="GO:0000139">
    <property type="term" value="C:Golgi membrane"/>
    <property type="evidence" value="ECO:0000304"/>
    <property type="project" value="Reactome"/>
</dbReference>
<dbReference type="GO" id="GO:0005882">
    <property type="term" value="C:intermediate filament"/>
    <property type="evidence" value="ECO:0000314"/>
    <property type="project" value="RGD"/>
</dbReference>
<dbReference type="GO" id="GO:0016020">
    <property type="term" value="C:membrane"/>
    <property type="evidence" value="ECO:0000266"/>
    <property type="project" value="RGD"/>
</dbReference>
<dbReference type="GO" id="GO:0043025">
    <property type="term" value="C:neuronal cell body"/>
    <property type="evidence" value="ECO:0000314"/>
    <property type="project" value="RGD"/>
</dbReference>
<dbReference type="GO" id="GO:0005886">
    <property type="term" value="C:plasma membrane"/>
    <property type="evidence" value="ECO:0000314"/>
    <property type="project" value="UniProtKB"/>
</dbReference>
<dbReference type="GO" id="GO:0045211">
    <property type="term" value="C:postsynaptic membrane"/>
    <property type="evidence" value="ECO:0000314"/>
    <property type="project" value="SynGO-UCL"/>
</dbReference>
<dbReference type="GO" id="GO:0048786">
    <property type="term" value="C:presynaptic active zone"/>
    <property type="evidence" value="ECO:0000314"/>
    <property type="project" value="RGD"/>
</dbReference>
<dbReference type="GO" id="GO:0042734">
    <property type="term" value="C:presynaptic membrane"/>
    <property type="evidence" value="ECO:0000314"/>
    <property type="project" value="SynGO-UCL"/>
</dbReference>
<dbReference type="GO" id="GO:0051393">
    <property type="term" value="F:alpha-actinin binding"/>
    <property type="evidence" value="ECO:0000314"/>
    <property type="project" value="RGD"/>
</dbReference>
<dbReference type="GO" id="GO:0005516">
    <property type="term" value="F:calmodulin binding"/>
    <property type="evidence" value="ECO:0000266"/>
    <property type="project" value="RGD"/>
</dbReference>
<dbReference type="GO" id="GO:0019899">
    <property type="term" value="F:enzyme binding"/>
    <property type="evidence" value="ECO:0000266"/>
    <property type="project" value="RGD"/>
</dbReference>
<dbReference type="GO" id="GO:0001609">
    <property type="term" value="F:G protein-coupled adenosine receptor activity"/>
    <property type="evidence" value="ECO:0000314"/>
    <property type="project" value="RGD"/>
</dbReference>
<dbReference type="GO" id="GO:0042802">
    <property type="term" value="F:identical protein binding"/>
    <property type="evidence" value="ECO:0000266"/>
    <property type="project" value="RGD"/>
</dbReference>
<dbReference type="GO" id="GO:0008289">
    <property type="term" value="F:lipid binding"/>
    <property type="evidence" value="ECO:0000266"/>
    <property type="project" value="RGD"/>
</dbReference>
<dbReference type="GO" id="GO:0044877">
    <property type="term" value="F:protein-containing complex binding"/>
    <property type="evidence" value="ECO:0000353"/>
    <property type="project" value="RGD"/>
</dbReference>
<dbReference type="GO" id="GO:0031802">
    <property type="term" value="F:type 5 metabotropic glutamate receptor binding"/>
    <property type="evidence" value="ECO:0000353"/>
    <property type="project" value="RGD"/>
</dbReference>
<dbReference type="GO" id="GO:0007189">
    <property type="term" value="P:adenylate cyclase-activating G protein-coupled receptor signaling pathway"/>
    <property type="evidence" value="ECO:0000315"/>
    <property type="project" value="RGD"/>
</dbReference>
<dbReference type="GO" id="GO:0097190">
    <property type="term" value="P:apoptotic signaling pathway"/>
    <property type="evidence" value="ECO:0000266"/>
    <property type="project" value="RGD"/>
</dbReference>
<dbReference type="GO" id="GO:0048143">
    <property type="term" value="P:astrocyte activation"/>
    <property type="evidence" value="ECO:0000315"/>
    <property type="project" value="RGD"/>
</dbReference>
<dbReference type="GO" id="GO:0042755">
    <property type="term" value="P:eating behavior"/>
    <property type="evidence" value="ECO:0000315"/>
    <property type="project" value="RGD"/>
</dbReference>
<dbReference type="GO" id="GO:0060079">
    <property type="term" value="P:excitatory postsynaptic potential"/>
    <property type="evidence" value="ECO:0000314"/>
    <property type="project" value="RGD"/>
</dbReference>
<dbReference type="GO" id="GO:0001973">
    <property type="term" value="P:G protein-coupled adenosine receptor signaling pathway"/>
    <property type="evidence" value="ECO:0000314"/>
    <property type="project" value="RGD"/>
</dbReference>
<dbReference type="GO" id="GO:0007186">
    <property type="term" value="P:G protein-coupled receptor signaling pathway"/>
    <property type="evidence" value="ECO:0000266"/>
    <property type="project" value="RGD"/>
</dbReference>
<dbReference type="GO" id="GO:0060080">
    <property type="term" value="P:inhibitory postsynaptic potential"/>
    <property type="evidence" value="ECO:0000266"/>
    <property type="project" value="RGD"/>
</dbReference>
<dbReference type="GO" id="GO:0007626">
    <property type="term" value="P:locomotory behavior"/>
    <property type="evidence" value="ECO:0000315"/>
    <property type="project" value="RGD"/>
</dbReference>
<dbReference type="GO" id="GO:0051899">
    <property type="term" value="P:membrane depolarization"/>
    <property type="evidence" value="ECO:0000315"/>
    <property type="project" value="RGD"/>
</dbReference>
<dbReference type="GO" id="GO:0046636">
    <property type="term" value="P:negative regulation of alpha-beta T cell activation"/>
    <property type="evidence" value="ECO:0000266"/>
    <property type="project" value="RGD"/>
</dbReference>
<dbReference type="GO" id="GO:0008285">
    <property type="term" value="P:negative regulation of cell population proliferation"/>
    <property type="evidence" value="ECO:0000314"/>
    <property type="project" value="RGD"/>
</dbReference>
<dbReference type="GO" id="GO:0050728">
    <property type="term" value="P:negative regulation of inflammatory response"/>
    <property type="evidence" value="ECO:0000266"/>
    <property type="project" value="RGD"/>
</dbReference>
<dbReference type="GO" id="GO:0043524">
    <property type="term" value="P:negative regulation of neuron apoptotic process"/>
    <property type="evidence" value="ECO:0000314"/>
    <property type="project" value="RGD"/>
</dbReference>
<dbReference type="GO" id="GO:0043116">
    <property type="term" value="P:negative regulation of vascular permeability"/>
    <property type="evidence" value="ECO:0000315"/>
    <property type="project" value="RGD"/>
</dbReference>
<dbReference type="GO" id="GO:0048812">
    <property type="term" value="P:neuron projection morphogenesis"/>
    <property type="evidence" value="ECO:0000314"/>
    <property type="project" value="RGD"/>
</dbReference>
<dbReference type="GO" id="GO:0007200">
    <property type="term" value="P:phospholipase C-activating G protein-coupled receptor signaling pathway"/>
    <property type="evidence" value="ECO:0000314"/>
    <property type="project" value="RGD"/>
</dbReference>
<dbReference type="GO" id="GO:0014057">
    <property type="term" value="P:positive regulation of acetylcholine secretion, neurotransmission"/>
    <property type="evidence" value="ECO:0000315"/>
    <property type="project" value="RGD"/>
</dbReference>
<dbReference type="GO" id="GO:2001235">
    <property type="term" value="P:positive regulation of apoptotic signaling pathway"/>
    <property type="evidence" value="ECO:0000266"/>
    <property type="project" value="RGD"/>
</dbReference>
<dbReference type="GO" id="GO:0045938">
    <property type="term" value="P:positive regulation of circadian sleep/wake cycle, sleep"/>
    <property type="evidence" value="ECO:0000314"/>
    <property type="project" value="RGD"/>
</dbReference>
<dbReference type="GO" id="GO:0070374">
    <property type="term" value="P:positive regulation of ERK1 and ERK2 cascade"/>
    <property type="evidence" value="ECO:0000314"/>
    <property type="project" value="RGD"/>
</dbReference>
<dbReference type="GO" id="GO:0014049">
    <property type="term" value="P:positive regulation of glutamate secretion"/>
    <property type="evidence" value="ECO:0000314"/>
    <property type="project" value="RGD"/>
</dbReference>
<dbReference type="GO" id="GO:1900273">
    <property type="term" value="P:positive regulation of long-term synaptic potentiation"/>
    <property type="evidence" value="ECO:0000315"/>
    <property type="project" value="RGD"/>
</dbReference>
<dbReference type="GO" id="GO:0050714">
    <property type="term" value="P:positive regulation of protein secretion"/>
    <property type="evidence" value="ECO:0000314"/>
    <property type="project" value="RGD"/>
</dbReference>
<dbReference type="GO" id="GO:0032230">
    <property type="term" value="P:positive regulation of synaptic transmission, GABAergic"/>
    <property type="evidence" value="ECO:0000266"/>
    <property type="project" value="RGD"/>
</dbReference>
<dbReference type="GO" id="GO:0051968">
    <property type="term" value="P:positive regulation of synaptic transmission, glutamatergic"/>
    <property type="evidence" value="ECO:0000314"/>
    <property type="project" value="RGD"/>
</dbReference>
<dbReference type="GO" id="GO:0035810">
    <property type="term" value="P:positive regulation of urine volume"/>
    <property type="evidence" value="ECO:0000315"/>
    <property type="project" value="RGD"/>
</dbReference>
<dbReference type="GO" id="GO:0060134">
    <property type="term" value="P:prepulse inhibition"/>
    <property type="evidence" value="ECO:0000315"/>
    <property type="project" value="RGD"/>
</dbReference>
<dbReference type="GO" id="GO:0099171">
    <property type="term" value="P:presynaptic modulation of chemical synaptic transmission"/>
    <property type="evidence" value="ECO:0000314"/>
    <property type="project" value="SynGO"/>
</dbReference>
<dbReference type="GO" id="GO:0051924">
    <property type="term" value="P:regulation of calcium ion transport"/>
    <property type="evidence" value="ECO:0000315"/>
    <property type="project" value="RGD"/>
</dbReference>
<dbReference type="GO" id="GO:0006355">
    <property type="term" value="P:regulation of DNA-templated transcription"/>
    <property type="evidence" value="ECO:0000314"/>
    <property type="project" value="RGD"/>
</dbReference>
<dbReference type="GO" id="GO:0051881">
    <property type="term" value="P:regulation of mitochondrial membrane potential"/>
    <property type="evidence" value="ECO:0000314"/>
    <property type="project" value="RGD"/>
</dbReference>
<dbReference type="GO" id="GO:0014061">
    <property type="term" value="P:regulation of norepinephrine secretion"/>
    <property type="evidence" value="ECO:0000315"/>
    <property type="project" value="RGD"/>
</dbReference>
<dbReference type="GO" id="GO:0043279">
    <property type="term" value="P:response to alkaloid"/>
    <property type="evidence" value="ECO:0000315"/>
    <property type="project" value="RGD"/>
</dbReference>
<dbReference type="GO" id="GO:0001975">
    <property type="term" value="P:response to amphetamine"/>
    <property type="evidence" value="ECO:0000266"/>
    <property type="project" value="RGD"/>
</dbReference>
<dbReference type="GO" id="GO:0031000">
    <property type="term" value="P:response to caffeine"/>
    <property type="evidence" value="ECO:0000314"/>
    <property type="project" value="RGD"/>
</dbReference>
<dbReference type="GO" id="GO:0014074">
    <property type="term" value="P:response to purine-containing compound"/>
    <property type="evidence" value="ECO:0000266"/>
    <property type="project" value="RGD"/>
</dbReference>
<dbReference type="GO" id="GO:0009410">
    <property type="term" value="P:response to xenobiotic stimulus"/>
    <property type="evidence" value="ECO:0000270"/>
    <property type="project" value="RGD"/>
</dbReference>
<dbReference type="GO" id="GO:0007271">
    <property type="term" value="P:synaptic transmission, cholinergic"/>
    <property type="evidence" value="ECO:0000315"/>
    <property type="project" value="RGD"/>
</dbReference>
<dbReference type="GO" id="GO:0001963">
    <property type="term" value="P:synaptic transmission, dopaminergic"/>
    <property type="evidence" value="ECO:0000266"/>
    <property type="project" value="RGD"/>
</dbReference>
<dbReference type="GO" id="GO:0035249">
    <property type="term" value="P:synaptic transmission, glutamatergic"/>
    <property type="evidence" value="ECO:0000314"/>
    <property type="project" value="RGD"/>
</dbReference>
<dbReference type="GO" id="GO:0042311">
    <property type="term" value="P:vasodilation"/>
    <property type="evidence" value="ECO:0000315"/>
    <property type="project" value="RGD"/>
</dbReference>
<dbReference type="CDD" id="cd15068">
    <property type="entry name" value="7tmA_Adenosine_R_A2A"/>
    <property type="match status" value="1"/>
</dbReference>
<dbReference type="FunFam" id="1.20.1070.10:FF:000061">
    <property type="entry name" value="Adenosine receptor A2"/>
    <property type="match status" value="1"/>
</dbReference>
<dbReference type="Gene3D" id="1.20.1070.10">
    <property type="entry name" value="Rhodopsin 7-helix transmembrane proteins"/>
    <property type="match status" value="1"/>
</dbReference>
<dbReference type="InterPro" id="IPR001513">
    <property type="entry name" value="Adeno_A2A_rcpt"/>
</dbReference>
<dbReference type="InterPro" id="IPR001634">
    <property type="entry name" value="Adenosn_rcpt"/>
</dbReference>
<dbReference type="InterPro" id="IPR000276">
    <property type="entry name" value="GPCR_Rhodpsn"/>
</dbReference>
<dbReference type="InterPro" id="IPR017452">
    <property type="entry name" value="GPCR_Rhodpsn_7TM"/>
</dbReference>
<dbReference type="PANTHER" id="PTHR24246:SF47">
    <property type="entry name" value="ADENOSINE RECEPTOR A2A"/>
    <property type="match status" value="1"/>
</dbReference>
<dbReference type="PANTHER" id="PTHR24246">
    <property type="entry name" value="OLFACTORY RECEPTOR AND ADENOSINE RECEPTOR"/>
    <property type="match status" value="1"/>
</dbReference>
<dbReference type="Pfam" id="PF00001">
    <property type="entry name" value="7tm_1"/>
    <property type="match status" value="1"/>
</dbReference>
<dbReference type="PRINTS" id="PR00553">
    <property type="entry name" value="ADENOSINA2AR"/>
</dbReference>
<dbReference type="PRINTS" id="PR00424">
    <property type="entry name" value="ADENOSINER"/>
</dbReference>
<dbReference type="PRINTS" id="PR00237">
    <property type="entry name" value="GPCRRHODOPSN"/>
</dbReference>
<dbReference type="SMART" id="SM01381">
    <property type="entry name" value="7TM_GPCR_Srsx"/>
    <property type="match status" value="1"/>
</dbReference>
<dbReference type="SUPFAM" id="SSF81321">
    <property type="entry name" value="Family A G protein-coupled receptor-like"/>
    <property type="match status" value="1"/>
</dbReference>
<dbReference type="PROSITE" id="PS00237">
    <property type="entry name" value="G_PROTEIN_RECEP_F1_1"/>
    <property type="match status" value="1"/>
</dbReference>
<dbReference type="PROSITE" id="PS50262">
    <property type="entry name" value="G_PROTEIN_RECEP_F1_2"/>
    <property type="match status" value="1"/>
</dbReference>
<organism>
    <name type="scientific">Rattus norvegicus</name>
    <name type="common">Rat</name>
    <dbReference type="NCBI Taxonomy" id="10116"/>
    <lineage>
        <taxon>Eukaryota</taxon>
        <taxon>Metazoa</taxon>
        <taxon>Chordata</taxon>
        <taxon>Craniata</taxon>
        <taxon>Vertebrata</taxon>
        <taxon>Euteleostomi</taxon>
        <taxon>Mammalia</taxon>
        <taxon>Eutheria</taxon>
        <taxon>Euarchontoglires</taxon>
        <taxon>Glires</taxon>
        <taxon>Rodentia</taxon>
        <taxon>Myomorpha</taxon>
        <taxon>Muroidea</taxon>
        <taxon>Muridae</taxon>
        <taxon>Murinae</taxon>
        <taxon>Rattus</taxon>
    </lineage>
</organism>
<accession>P30543</accession>
<name>AA2AR_RAT</name>